<proteinExistence type="inferred from homology"/>
<protein>
    <recommendedName>
        <fullName>HssA/B-like protein 40</fullName>
    </recommendedName>
</protein>
<sequence length="101" mass="8997">MTLFSSISSMSTSMSGSKSSISSFGSGTGMGSNSIACGGGCGGSGGILGSGLGLGLGLGLDLTGGSRSRGACGGNGGNRGNGNGGMGGGNGSCCGGPCCGI</sequence>
<dbReference type="EMBL" id="AAFI02000039">
    <property type="protein sequence ID" value="EAL67016.1"/>
    <property type="molecule type" value="Genomic_DNA"/>
</dbReference>
<dbReference type="RefSeq" id="XP_640993.1">
    <property type="nucleotide sequence ID" value="XM_635901.1"/>
</dbReference>
<dbReference type="PaxDb" id="44689-DDB0234120"/>
<dbReference type="EnsemblProtists" id="EAL67016">
    <property type="protein sequence ID" value="EAL67016"/>
    <property type="gene ID" value="DDB_G0280949"/>
</dbReference>
<dbReference type="GeneID" id="8622801"/>
<dbReference type="KEGG" id="ddi:DDB_G0280949"/>
<dbReference type="dictyBase" id="DDB_G0280949"/>
<dbReference type="HOGENOM" id="CLU_181850_0_0_1"/>
<dbReference type="InParanoid" id="Q54UM8"/>
<dbReference type="PRO" id="PR:Q54UM8"/>
<dbReference type="Proteomes" id="UP000002195">
    <property type="component" value="Chromosome 3"/>
</dbReference>
<dbReference type="GO" id="GO:0030587">
    <property type="term" value="P:sorocarp development"/>
    <property type="evidence" value="ECO:0000318"/>
    <property type="project" value="GO_Central"/>
</dbReference>
<dbReference type="InterPro" id="IPR050533">
    <property type="entry name" value="HssA/B-like_chaperone"/>
</dbReference>
<dbReference type="InterPro" id="IPR008455">
    <property type="entry name" value="HssA/B-related"/>
</dbReference>
<dbReference type="PANTHER" id="PTHR31059">
    <property type="entry name" value="HSSA/B-LIKE PROTEIN 1-RELATED-RELATED"/>
    <property type="match status" value="1"/>
</dbReference>
<dbReference type="PANTHER" id="PTHR31059:SF5">
    <property type="entry name" value="HSSA_B-LIKE PROTEIN 1-RELATED"/>
    <property type="match status" value="1"/>
</dbReference>
<dbReference type="Pfam" id="PF05710">
    <property type="entry name" value="Coiled"/>
    <property type="match status" value="1"/>
</dbReference>
<keyword id="KW-1185">Reference proteome</keyword>
<evidence type="ECO:0000256" key="1">
    <source>
        <dbReference type="SAM" id="MobiDB-lite"/>
    </source>
</evidence>
<evidence type="ECO:0000305" key="2"/>
<name>HSL40_DICDI</name>
<comment type="similarity">
    <text evidence="2">Belongs to the hssA/B family.</text>
</comment>
<organism>
    <name type="scientific">Dictyostelium discoideum</name>
    <name type="common">Social amoeba</name>
    <dbReference type="NCBI Taxonomy" id="44689"/>
    <lineage>
        <taxon>Eukaryota</taxon>
        <taxon>Amoebozoa</taxon>
        <taxon>Evosea</taxon>
        <taxon>Eumycetozoa</taxon>
        <taxon>Dictyostelia</taxon>
        <taxon>Dictyosteliales</taxon>
        <taxon>Dictyosteliaceae</taxon>
        <taxon>Dictyostelium</taxon>
    </lineage>
</organism>
<gene>
    <name type="primary">hssl40</name>
    <name type="ORF">DDB_G0280949</name>
</gene>
<reference key="1">
    <citation type="journal article" date="2005" name="Nature">
        <title>The genome of the social amoeba Dictyostelium discoideum.</title>
        <authorList>
            <person name="Eichinger L."/>
            <person name="Pachebat J.A."/>
            <person name="Gloeckner G."/>
            <person name="Rajandream M.A."/>
            <person name="Sucgang R."/>
            <person name="Berriman M."/>
            <person name="Song J."/>
            <person name="Olsen R."/>
            <person name="Szafranski K."/>
            <person name="Xu Q."/>
            <person name="Tunggal B."/>
            <person name="Kummerfeld S."/>
            <person name="Madera M."/>
            <person name="Konfortov B.A."/>
            <person name="Rivero F."/>
            <person name="Bankier A.T."/>
            <person name="Lehmann R."/>
            <person name="Hamlin N."/>
            <person name="Davies R."/>
            <person name="Gaudet P."/>
            <person name="Fey P."/>
            <person name="Pilcher K."/>
            <person name="Chen G."/>
            <person name="Saunders D."/>
            <person name="Sodergren E.J."/>
            <person name="Davis P."/>
            <person name="Kerhornou A."/>
            <person name="Nie X."/>
            <person name="Hall N."/>
            <person name="Anjard C."/>
            <person name="Hemphill L."/>
            <person name="Bason N."/>
            <person name="Farbrother P."/>
            <person name="Desany B."/>
            <person name="Just E."/>
            <person name="Morio T."/>
            <person name="Rost R."/>
            <person name="Churcher C.M."/>
            <person name="Cooper J."/>
            <person name="Haydock S."/>
            <person name="van Driessche N."/>
            <person name="Cronin A."/>
            <person name="Goodhead I."/>
            <person name="Muzny D.M."/>
            <person name="Mourier T."/>
            <person name="Pain A."/>
            <person name="Lu M."/>
            <person name="Harper D."/>
            <person name="Lindsay R."/>
            <person name="Hauser H."/>
            <person name="James K.D."/>
            <person name="Quiles M."/>
            <person name="Madan Babu M."/>
            <person name="Saito T."/>
            <person name="Buchrieser C."/>
            <person name="Wardroper A."/>
            <person name="Felder M."/>
            <person name="Thangavelu M."/>
            <person name="Johnson D."/>
            <person name="Knights A."/>
            <person name="Loulseged H."/>
            <person name="Mungall K.L."/>
            <person name="Oliver K."/>
            <person name="Price C."/>
            <person name="Quail M.A."/>
            <person name="Urushihara H."/>
            <person name="Hernandez J."/>
            <person name="Rabbinowitsch E."/>
            <person name="Steffen D."/>
            <person name="Sanders M."/>
            <person name="Ma J."/>
            <person name="Kohara Y."/>
            <person name="Sharp S."/>
            <person name="Simmonds M.N."/>
            <person name="Spiegler S."/>
            <person name="Tivey A."/>
            <person name="Sugano S."/>
            <person name="White B."/>
            <person name="Walker D."/>
            <person name="Woodward J.R."/>
            <person name="Winckler T."/>
            <person name="Tanaka Y."/>
            <person name="Shaulsky G."/>
            <person name="Schleicher M."/>
            <person name="Weinstock G.M."/>
            <person name="Rosenthal A."/>
            <person name="Cox E.C."/>
            <person name="Chisholm R.L."/>
            <person name="Gibbs R.A."/>
            <person name="Loomis W.F."/>
            <person name="Platzer M."/>
            <person name="Kay R.R."/>
            <person name="Williams J.G."/>
            <person name="Dear P.H."/>
            <person name="Noegel A.A."/>
            <person name="Barrell B.G."/>
            <person name="Kuspa A."/>
        </authorList>
    </citation>
    <scope>NUCLEOTIDE SEQUENCE [LARGE SCALE GENOMIC DNA]</scope>
    <source>
        <strain>AX4</strain>
    </source>
</reference>
<feature type="chain" id="PRO_0000330408" description="HssA/B-like protein 40">
    <location>
        <begin position="1"/>
        <end position="101"/>
    </location>
</feature>
<feature type="region of interest" description="Disordered" evidence="1">
    <location>
        <begin position="1"/>
        <end position="26"/>
    </location>
</feature>
<accession>Q54UM8</accession>